<sequence length="123" mass="13799">MATINQLVRKPRKRMVDKSDVPALQNCPQRRGVCTRVYTTTPKKPNSALRKVCRVRLTNGFEVSSYIGGEGHNLQEHSVVLIRGGRVKDLPGVRYHTVRGSLDTSGVKDRKQGRSKYGAKRPK</sequence>
<name>RS12_PSEAB</name>
<gene>
    <name evidence="2" type="primary">rpsL</name>
    <name type="ordered locus">PA14_08790</name>
</gene>
<feature type="chain" id="PRO_0000296018" description="Small ribosomal subunit protein uS12">
    <location>
        <begin position="1"/>
        <end position="123"/>
    </location>
</feature>
<feature type="region of interest" description="Disordered" evidence="3">
    <location>
        <begin position="100"/>
        <end position="123"/>
    </location>
</feature>
<feature type="compositionally biased region" description="Basic residues" evidence="3">
    <location>
        <begin position="113"/>
        <end position="123"/>
    </location>
</feature>
<feature type="modified residue" description="3-methylthioaspartic acid" evidence="1">
    <location>
        <position position="89"/>
    </location>
</feature>
<protein>
    <recommendedName>
        <fullName evidence="2">Small ribosomal subunit protein uS12</fullName>
    </recommendedName>
    <alternativeName>
        <fullName evidence="4">30S ribosomal protein S12</fullName>
    </alternativeName>
</protein>
<evidence type="ECO:0000250" key="1"/>
<evidence type="ECO:0000255" key="2">
    <source>
        <dbReference type="HAMAP-Rule" id="MF_00403"/>
    </source>
</evidence>
<evidence type="ECO:0000256" key="3">
    <source>
        <dbReference type="SAM" id="MobiDB-lite"/>
    </source>
</evidence>
<evidence type="ECO:0000305" key="4"/>
<dbReference type="EMBL" id="CP000438">
    <property type="protein sequence ID" value="ABJ13539.1"/>
    <property type="molecule type" value="Genomic_DNA"/>
</dbReference>
<dbReference type="RefSeq" id="WP_003093744.1">
    <property type="nucleotide sequence ID" value="NZ_CP034244.1"/>
</dbReference>
<dbReference type="SMR" id="Q02T85"/>
<dbReference type="GeneID" id="77219193"/>
<dbReference type="KEGG" id="pau:PA14_08790"/>
<dbReference type="PseudoCAP" id="PA14_08790"/>
<dbReference type="HOGENOM" id="CLU_104295_1_2_6"/>
<dbReference type="BioCyc" id="PAER208963:G1G74-731-MONOMER"/>
<dbReference type="Proteomes" id="UP000000653">
    <property type="component" value="Chromosome"/>
</dbReference>
<dbReference type="GO" id="GO:0015935">
    <property type="term" value="C:small ribosomal subunit"/>
    <property type="evidence" value="ECO:0007669"/>
    <property type="project" value="InterPro"/>
</dbReference>
<dbReference type="GO" id="GO:0019843">
    <property type="term" value="F:rRNA binding"/>
    <property type="evidence" value="ECO:0007669"/>
    <property type="project" value="UniProtKB-UniRule"/>
</dbReference>
<dbReference type="GO" id="GO:0003735">
    <property type="term" value="F:structural constituent of ribosome"/>
    <property type="evidence" value="ECO:0007669"/>
    <property type="project" value="InterPro"/>
</dbReference>
<dbReference type="GO" id="GO:0000049">
    <property type="term" value="F:tRNA binding"/>
    <property type="evidence" value="ECO:0007669"/>
    <property type="project" value="UniProtKB-UniRule"/>
</dbReference>
<dbReference type="GO" id="GO:0006412">
    <property type="term" value="P:translation"/>
    <property type="evidence" value="ECO:0007669"/>
    <property type="project" value="UniProtKB-UniRule"/>
</dbReference>
<dbReference type="CDD" id="cd03368">
    <property type="entry name" value="Ribosomal_S12"/>
    <property type="match status" value="1"/>
</dbReference>
<dbReference type="FunFam" id="2.40.50.140:FF:000001">
    <property type="entry name" value="30S ribosomal protein S12"/>
    <property type="match status" value="1"/>
</dbReference>
<dbReference type="Gene3D" id="2.40.50.140">
    <property type="entry name" value="Nucleic acid-binding proteins"/>
    <property type="match status" value="1"/>
</dbReference>
<dbReference type="HAMAP" id="MF_00403_B">
    <property type="entry name" value="Ribosomal_uS12_B"/>
    <property type="match status" value="1"/>
</dbReference>
<dbReference type="InterPro" id="IPR012340">
    <property type="entry name" value="NA-bd_OB-fold"/>
</dbReference>
<dbReference type="InterPro" id="IPR006032">
    <property type="entry name" value="Ribosomal_uS12"/>
</dbReference>
<dbReference type="InterPro" id="IPR005679">
    <property type="entry name" value="Ribosomal_uS12_bac"/>
</dbReference>
<dbReference type="NCBIfam" id="TIGR00981">
    <property type="entry name" value="rpsL_bact"/>
    <property type="match status" value="1"/>
</dbReference>
<dbReference type="PANTHER" id="PTHR11652">
    <property type="entry name" value="30S RIBOSOMAL PROTEIN S12 FAMILY MEMBER"/>
    <property type="match status" value="1"/>
</dbReference>
<dbReference type="Pfam" id="PF00164">
    <property type="entry name" value="Ribosom_S12_S23"/>
    <property type="match status" value="1"/>
</dbReference>
<dbReference type="PIRSF" id="PIRSF002133">
    <property type="entry name" value="Ribosomal_S12/S23"/>
    <property type="match status" value="1"/>
</dbReference>
<dbReference type="PRINTS" id="PR01034">
    <property type="entry name" value="RIBOSOMALS12"/>
</dbReference>
<dbReference type="SUPFAM" id="SSF50249">
    <property type="entry name" value="Nucleic acid-binding proteins"/>
    <property type="match status" value="1"/>
</dbReference>
<dbReference type="PROSITE" id="PS00055">
    <property type="entry name" value="RIBOSOMAL_S12"/>
    <property type="match status" value="1"/>
</dbReference>
<proteinExistence type="inferred from homology"/>
<reference key="1">
    <citation type="journal article" date="2006" name="Genome Biol.">
        <title>Genomic analysis reveals that Pseudomonas aeruginosa virulence is combinatorial.</title>
        <authorList>
            <person name="Lee D.G."/>
            <person name="Urbach J.M."/>
            <person name="Wu G."/>
            <person name="Liberati N.T."/>
            <person name="Feinbaum R.L."/>
            <person name="Miyata S."/>
            <person name="Diggins L.T."/>
            <person name="He J."/>
            <person name="Saucier M."/>
            <person name="Deziel E."/>
            <person name="Friedman L."/>
            <person name="Li L."/>
            <person name="Grills G."/>
            <person name="Montgomery K."/>
            <person name="Kucherlapati R."/>
            <person name="Rahme L.G."/>
            <person name="Ausubel F.M."/>
        </authorList>
    </citation>
    <scope>NUCLEOTIDE SEQUENCE [LARGE SCALE GENOMIC DNA]</scope>
    <source>
        <strain>UCBPP-PA14</strain>
    </source>
</reference>
<accession>Q02T85</accession>
<comment type="function">
    <text evidence="2">With S4 and S5 plays an important role in translational accuracy.</text>
</comment>
<comment type="function">
    <text evidence="2">Interacts with and stabilizes bases of the 16S rRNA that are involved in tRNA selection in the A site and with the mRNA backbone. Located at the interface of the 30S and 50S subunits, it traverses the body of the 30S subunit contacting proteins on the other side and probably holding the rRNA structure together. The combined cluster of proteins S8, S12 and S17 appears to hold together the shoulder and platform of the 30S subunit.</text>
</comment>
<comment type="subunit">
    <text evidence="2">Part of the 30S ribosomal subunit. Contacts proteins S8 and S17. May interact with IF1 in the 30S initiation complex.</text>
</comment>
<comment type="similarity">
    <text evidence="2">Belongs to the universal ribosomal protein uS12 family.</text>
</comment>
<organism>
    <name type="scientific">Pseudomonas aeruginosa (strain UCBPP-PA14)</name>
    <dbReference type="NCBI Taxonomy" id="208963"/>
    <lineage>
        <taxon>Bacteria</taxon>
        <taxon>Pseudomonadati</taxon>
        <taxon>Pseudomonadota</taxon>
        <taxon>Gammaproteobacteria</taxon>
        <taxon>Pseudomonadales</taxon>
        <taxon>Pseudomonadaceae</taxon>
        <taxon>Pseudomonas</taxon>
    </lineage>
</organism>
<keyword id="KW-0488">Methylation</keyword>
<keyword id="KW-0687">Ribonucleoprotein</keyword>
<keyword id="KW-0689">Ribosomal protein</keyword>
<keyword id="KW-0694">RNA-binding</keyword>
<keyword id="KW-0699">rRNA-binding</keyword>
<keyword id="KW-0820">tRNA-binding</keyword>